<name>PFKA_BUCCC</name>
<organism>
    <name type="scientific">Buchnera aphidicola subsp. Cinara cedri (strain Cc)</name>
    <dbReference type="NCBI Taxonomy" id="372461"/>
    <lineage>
        <taxon>Bacteria</taxon>
        <taxon>Pseudomonadati</taxon>
        <taxon>Pseudomonadota</taxon>
        <taxon>Gammaproteobacteria</taxon>
        <taxon>Enterobacterales</taxon>
        <taxon>Erwiniaceae</taxon>
        <taxon>Buchnera</taxon>
    </lineage>
</organism>
<gene>
    <name evidence="1" type="primary">pfkA</name>
    <name type="ordered locus">BCc_187</name>
</gene>
<accession>Q057P0</accession>
<sequence length="320" mass="35450">MIKKIGILTSGGDSPGMNAIIRSVVCTALNHNIEVKGIYNGFLGLYNNDMKLLKYSHVANLLNQGGTILGSSRFLEFKLEKTRKIAIKNIYKRKIDCLIIIGGDGSYKAANFLTNMGVPCIGIPGTIDNDVSGTDYTVGYFTALETVVDAIDKLRDTSASHHRISIIEIMGRYCGDLTLSAAIAGGCEFIVIPEIIYQKELLLLEIQKSIKKGNKHSIVAITEHICDVNKLAKYIQKKTFKETRATILGHIQRGGKPVAYDRILASRMGIYAIQLLLKGYKGQCIGVINNKIVHHNINYALKNMKKIFKKDLLNSIKKIY</sequence>
<proteinExistence type="inferred from homology"/>
<dbReference type="EC" id="2.7.1.11" evidence="1"/>
<dbReference type="EMBL" id="CP000263">
    <property type="protein sequence ID" value="ABJ90659.1"/>
    <property type="molecule type" value="Genomic_DNA"/>
</dbReference>
<dbReference type="RefSeq" id="WP_011672578.1">
    <property type="nucleotide sequence ID" value="NC_008513.1"/>
</dbReference>
<dbReference type="SMR" id="Q057P0"/>
<dbReference type="STRING" id="372461.BCc_187"/>
<dbReference type="KEGG" id="bcc:BCc_187"/>
<dbReference type="eggNOG" id="COG0205">
    <property type="taxonomic scope" value="Bacteria"/>
</dbReference>
<dbReference type="HOGENOM" id="CLU_020655_0_1_6"/>
<dbReference type="OrthoDB" id="9802503at2"/>
<dbReference type="UniPathway" id="UPA00109">
    <property type="reaction ID" value="UER00182"/>
</dbReference>
<dbReference type="Proteomes" id="UP000000669">
    <property type="component" value="Chromosome"/>
</dbReference>
<dbReference type="GO" id="GO:0005945">
    <property type="term" value="C:6-phosphofructokinase complex"/>
    <property type="evidence" value="ECO:0007669"/>
    <property type="project" value="TreeGrafter"/>
</dbReference>
<dbReference type="GO" id="GO:0003872">
    <property type="term" value="F:6-phosphofructokinase activity"/>
    <property type="evidence" value="ECO:0007669"/>
    <property type="project" value="UniProtKB-UniRule"/>
</dbReference>
<dbReference type="GO" id="GO:0016208">
    <property type="term" value="F:AMP binding"/>
    <property type="evidence" value="ECO:0007669"/>
    <property type="project" value="TreeGrafter"/>
</dbReference>
<dbReference type="GO" id="GO:0005524">
    <property type="term" value="F:ATP binding"/>
    <property type="evidence" value="ECO:0007669"/>
    <property type="project" value="UniProtKB-KW"/>
</dbReference>
<dbReference type="GO" id="GO:0070095">
    <property type="term" value="F:fructose-6-phosphate binding"/>
    <property type="evidence" value="ECO:0007669"/>
    <property type="project" value="TreeGrafter"/>
</dbReference>
<dbReference type="GO" id="GO:0042802">
    <property type="term" value="F:identical protein binding"/>
    <property type="evidence" value="ECO:0007669"/>
    <property type="project" value="TreeGrafter"/>
</dbReference>
<dbReference type="GO" id="GO:0046872">
    <property type="term" value="F:metal ion binding"/>
    <property type="evidence" value="ECO:0007669"/>
    <property type="project" value="UniProtKB-KW"/>
</dbReference>
<dbReference type="GO" id="GO:0048029">
    <property type="term" value="F:monosaccharide binding"/>
    <property type="evidence" value="ECO:0007669"/>
    <property type="project" value="TreeGrafter"/>
</dbReference>
<dbReference type="GO" id="GO:0061621">
    <property type="term" value="P:canonical glycolysis"/>
    <property type="evidence" value="ECO:0007669"/>
    <property type="project" value="TreeGrafter"/>
</dbReference>
<dbReference type="GO" id="GO:0030388">
    <property type="term" value="P:fructose 1,6-bisphosphate metabolic process"/>
    <property type="evidence" value="ECO:0007669"/>
    <property type="project" value="TreeGrafter"/>
</dbReference>
<dbReference type="GO" id="GO:0006002">
    <property type="term" value="P:fructose 6-phosphate metabolic process"/>
    <property type="evidence" value="ECO:0007669"/>
    <property type="project" value="InterPro"/>
</dbReference>
<dbReference type="FunFam" id="3.40.50.450:FF:000001">
    <property type="entry name" value="ATP-dependent 6-phosphofructokinase"/>
    <property type="match status" value="1"/>
</dbReference>
<dbReference type="FunFam" id="3.40.50.460:FF:000002">
    <property type="entry name" value="ATP-dependent 6-phosphofructokinase"/>
    <property type="match status" value="1"/>
</dbReference>
<dbReference type="Gene3D" id="3.40.50.450">
    <property type="match status" value="1"/>
</dbReference>
<dbReference type="Gene3D" id="3.40.50.460">
    <property type="entry name" value="Phosphofructokinase domain"/>
    <property type="match status" value="1"/>
</dbReference>
<dbReference type="HAMAP" id="MF_00339">
    <property type="entry name" value="Phosphofructokinase_I_B1"/>
    <property type="match status" value="1"/>
</dbReference>
<dbReference type="InterPro" id="IPR022953">
    <property type="entry name" value="ATP_PFK"/>
</dbReference>
<dbReference type="InterPro" id="IPR012003">
    <property type="entry name" value="ATP_PFK_prok-type"/>
</dbReference>
<dbReference type="InterPro" id="IPR012828">
    <property type="entry name" value="PFKA_ATP_prok"/>
</dbReference>
<dbReference type="InterPro" id="IPR015912">
    <property type="entry name" value="Phosphofructokinase_CS"/>
</dbReference>
<dbReference type="InterPro" id="IPR000023">
    <property type="entry name" value="Phosphofructokinase_dom"/>
</dbReference>
<dbReference type="InterPro" id="IPR035966">
    <property type="entry name" value="PKF_sf"/>
</dbReference>
<dbReference type="NCBIfam" id="TIGR02482">
    <property type="entry name" value="PFKA_ATP"/>
    <property type="match status" value="1"/>
</dbReference>
<dbReference type="NCBIfam" id="NF002872">
    <property type="entry name" value="PRK03202.1"/>
    <property type="match status" value="1"/>
</dbReference>
<dbReference type="PANTHER" id="PTHR13697:SF4">
    <property type="entry name" value="ATP-DEPENDENT 6-PHOSPHOFRUCTOKINASE"/>
    <property type="match status" value="1"/>
</dbReference>
<dbReference type="PANTHER" id="PTHR13697">
    <property type="entry name" value="PHOSPHOFRUCTOKINASE"/>
    <property type="match status" value="1"/>
</dbReference>
<dbReference type="Pfam" id="PF00365">
    <property type="entry name" value="PFK"/>
    <property type="match status" value="1"/>
</dbReference>
<dbReference type="PIRSF" id="PIRSF000532">
    <property type="entry name" value="ATP_PFK_prok"/>
    <property type="match status" value="1"/>
</dbReference>
<dbReference type="PRINTS" id="PR00476">
    <property type="entry name" value="PHFRCTKINASE"/>
</dbReference>
<dbReference type="SUPFAM" id="SSF53784">
    <property type="entry name" value="Phosphofructokinase"/>
    <property type="match status" value="1"/>
</dbReference>
<dbReference type="PROSITE" id="PS00433">
    <property type="entry name" value="PHOSPHOFRUCTOKINASE"/>
    <property type="match status" value="1"/>
</dbReference>
<reference key="1">
    <citation type="journal article" date="2006" name="Science">
        <title>A small microbial genome: the end of a long symbiotic relationship?</title>
        <authorList>
            <person name="Perez-Brocal V."/>
            <person name="Gil R."/>
            <person name="Ramos S."/>
            <person name="Lamelas A."/>
            <person name="Postigo M."/>
            <person name="Michelena J.M."/>
            <person name="Silva F.J."/>
            <person name="Moya A."/>
            <person name="Latorre A."/>
        </authorList>
    </citation>
    <scope>NUCLEOTIDE SEQUENCE [LARGE SCALE GENOMIC DNA]</scope>
    <source>
        <strain>Cc</strain>
    </source>
</reference>
<feature type="chain" id="PRO_1000059749" description="ATP-dependent 6-phosphofructokinase">
    <location>
        <begin position="1"/>
        <end position="320"/>
    </location>
</feature>
<feature type="active site" description="Proton acceptor" evidence="1">
    <location>
        <position position="128"/>
    </location>
</feature>
<feature type="binding site" evidence="1">
    <location>
        <position position="12"/>
    </location>
    <ligand>
        <name>ATP</name>
        <dbReference type="ChEBI" id="CHEBI:30616"/>
    </ligand>
</feature>
<feature type="binding site" evidence="1">
    <location>
        <begin position="73"/>
        <end position="74"/>
    </location>
    <ligand>
        <name>ATP</name>
        <dbReference type="ChEBI" id="CHEBI:30616"/>
    </ligand>
</feature>
<feature type="binding site" evidence="1">
    <location>
        <begin position="103"/>
        <end position="106"/>
    </location>
    <ligand>
        <name>ATP</name>
        <dbReference type="ChEBI" id="CHEBI:30616"/>
    </ligand>
</feature>
<feature type="binding site" evidence="1">
    <location>
        <position position="104"/>
    </location>
    <ligand>
        <name>Mg(2+)</name>
        <dbReference type="ChEBI" id="CHEBI:18420"/>
        <note>catalytic</note>
    </ligand>
</feature>
<feature type="binding site" description="in other chain" evidence="1">
    <location>
        <begin position="126"/>
        <end position="128"/>
    </location>
    <ligand>
        <name>substrate</name>
        <note>ligand shared between dimeric partners</note>
    </ligand>
</feature>
<feature type="binding site" evidence="1">
    <location>
        <position position="155"/>
    </location>
    <ligand>
        <name>ADP</name>
        <dbReference type="ChEBI" id="CHEBI:456216"/>
        <note>allosteric activator</note>
    </ligand>
</feature>
<feature type="binding site" evidence="1">
    <location>
        <position position="163"/>
    </location>
    <ligand>
        <name>substrate</name>
        <note>ligand shared between dimeric partners</note>
    </ligand>
</feature>
<feature type="binding site" description="in other chain" evidence="1">
    <location>
        <begin position="170"/>
        <end position="172"/>
    </location>
    <ligand>
        <name>substrate</name>
        <note>ligand shared between dimeric partners</note>
    </ligand>
</feature>
<feature type="binding site" evidence="1">
    <location>
        <begin position="186"/>
        <end position="188"/>
    </location>
    <ligand>
        <name>ADP</name>
        <dbReference type="ChEBI" id="CHEBI:456216"/>
        <note>allosteric activator</note>
    </ligand>
</feature>
<feature type="binding site" evidence="1">
    <location>
        <position position="212"/>
    </location>
    <ligand>
        <name>ADP</name>
        <dbReference type="ChEBI" id="CHEBI:456216"/>
        <note>allosteric activator</note>
    </ligand>
</feature>
<feature type="binding site" description="in other chain" evidence="1">
    <location>
        <position position="223"/>
    </location>
    <ligand>
        <name>substrate</name>
        <note>ligand shared between dimeric partners</note>
    </ligand>
</feature>
<feature type="binding site" evidence="1">
    <location>
        <position position="244"/>
    </location>
    <ligand>
        <name>substrate</name>
        <note>ligand shared between dimeric partners</note>
    </ligand>
</feature>
<feature type="binding site" description="in other chain" evidence="1">
    <location>
        <begin position="250"/>
        <end position="253"/>
    </location>
    <ligand>
        <name>substrate</name>
        <note>ligand shared between dimeric partners</note>
    </ligand>
</feature>
<evidence type="ECO:0000255" key="1">
    <source>
        <dbReference type="HAMAP-Rule" id="MF_00339"/>
    </source>
</evidence>
<protein>
    <recommendedName>
        <fullName evidence="1">ATP-dependent 6-phosphofructokinase</fullName>
        <shortName evidence="1">ATP-PFK</shortName>
        <shortName evidence="1">Phosphofructokinase</shortName>
        <ecNumber evidence="1">2.7.1.11</ecNumber>
    </recommendedName>
    <alternativeName>
        <fullName evidence="1">Phosphohexokinase</fullName>
    </alternativeName>
</protein>
<keyword id="KW-0021">Allosteric enzyme</keyword>
<keyword id="KW-0067">ATP-binding</keyword>
<keyword id="KW-0963">Cytoplasm</keyword>
<keyword id="KW-0324">Glycolysis</keyword>
<keyword id="KW-0418">Kinase</keyword>
<keyword id="KW-0460">Magnesium</keyword>
<keyword id="KW-0479">Metal-binding</keyword>
<keyword id="KW-0547">Nucleotide-binding</keyword>
<keyword id="KW-1185">Reference proteome</keyword>
<keyword id="KW-0808">Transferase</keyword>
<comment type="function">
    <text evidence="1">Catalyzes the phosphorylation of D-fructose 6-phosphate to fructose 1,6-bisphosphate by ATP, the first committing step of glycolysis.</text>
</comment>
<comment type="catalytic activity">
    <reaction evidence="1">
        <text>beta-D-fructose 6-phosphate + ATP = beta-D-fructose 1,6-bisphosphate + ADP + H(+)</text>
        <dbReference type="Rhea" id="RHEA:16109"/>
        <dbReference type="ChEBI" id="CHEBI:15378"/>
        <dbReference type="ChEBI" id="CHEBI:30616"/>
        <dbReference type="ChEBI" id="CHEBI:32966"/>
        <dbReference type="ChEBI" id="CHEBI:57634"/>
        <dbReference type="ChEBI" id="CHEBI:456216"/>
        <dbReference type="EC" id="2.7.1.11"/>
    </reaction>
</comment>
<comment type="cofactor">
    <cofactor evidence="1">
        <name>Mg(2+)</name>
        <dbReference type="ChEBI" id="CHEBI:18420"/>
    </cofactor>
</comment>
<comment type="activity regulation">
    <text evidence="1">Allosterically activated by ADP and other diphosphonucleosides, and allosterically inhibited by phosphoenolpyruvate.</text>
</comment>
<comment type="pathway">
    <text evidence="1">Carbohydrate degradation; glycolysis; D-glyceraldehyde 3-phosphate and glycerone phosphate from D-glucose: step 3/4.</text>
</comment>
<comment type="subunit">
    <text evidence="1">Homotetramer.</text>
</comment>
<comment type="subcellular location">
    <subcellularLocation>
        <location evidence="1">Cytoplasm</location>
    </subcellularLocation>
</comment>
<comment type="similarity">
    <text evidence="1">Belongs to the phosphofructokinase type A (PFKA) family. ATP-dependent PFK group I subfamily. Prokaryotic clade 'B1' sub-subfamily.</text>
</comment>